<name>DNAG_LISIN</name>
<accession>Q92BQ5</accession>
<comment type="function">
    <text evidence="1">RNA polymerase that catalyzes the synthesis of short RNA molecules used as primers for DNA polymerase during DNA replication.</text>
</comment>
<comment type="catalytic activity">
    <reaction evidence="1">
        <text>ssDNA + n NTP = ssDNA/pppN(pN)n-1 hybrid + (n-1) diphosphate.</text>
        <dbReference type="EC" id="2.7.7.101"/>
    </reaction>
</comment>
<comment type="cofactor">
    <cofactor evidence="1">
        <name>Zn(2+)</name>
        <dbReference type="ChEBI" id="CHEBI:29105"/>
    </cofactor>
    <text evidence="1">Binds 1 zinc ion per monomer.</text>
</comment>
<comment type="cofactor">
    <cofactor evidence="1">
        <name>Mg(2+)</name>
        <dbReference type="ChEBI" id="CHEBI:18420"/>
    </cofactor>
    <text evidence="1">Binds two Mg(2+) per subunit.</text>
</comment>
<comment type="subunit">
    <text evidence="1">Monomer. Interacts with DnaB.</text>
</comment>
<comment type="domain">
    <text evidence="1">Contains an N-terminal zinc-binding domain, a central core domain that contains the primase activity, and a C-terminal DnaB-binding domain.</text>
</comment>
<comment type="similarity">
    <text evidence="1">Belongs to the DnaG primase family.</text>
</comment>
<reference key="1">
    <citation type="journal article" date="2001" name="Science">
        <title>Comparative genomics of Listeria species.</title>
        <authorList>
            <person name="Glaser P."/>
            <person name="Frangeul L."/>
            <person name="Buchrieser C."/>
            <person name="Rusniok C."/>
            <person name="Amend A."/>
            <person name="Baquero F."/>
            <person name="Berche P."/>
            <person name="Bloecker H."/>
            <person name="Brandt P."/>
            <person name="Chakraborty T."/>
            <person name="Charbit A."/>
            <person name="Chetouani F."/>
            <person name="Couve E."/>
            <person name="de Daruvar A."/>
            <person name="Dehoux P."/>
            <person name="Domann E."/>
            <person name="Dominguez-Bernal G."/>
            <person name="Duchaud E."/>
            <person name="Durant L."/>
            <person name="Dussurget O."/>
            <person name="Entian K.-D."/>
            <person name="Fsihi H."/>
            <person name="Garcia-del Portillo F."/>
            <person name="Garrido P."/>
            <person name="Gautier L."/>
            <person name="Goebel W."/>
            <person name="Gomez-Lopez N."/>
            <person name="Hain T."/>
            <person name="Hauf J."/>
            <person name="Jackson D."/>
            <person name="Jones L.-M."/>
            <person name="Kaerst U."/>
            <person name="Kreft J."/>
            <person name="Kuhn M."/>
            <person name="Kunst F."/>
            <person name="Kurapkat G."/>
            <person name="Madueno E."/>
            <person name="Maitournam A."/>
            <person name="Mata Vicente J."/>
            <person name="Ng E."/>
            <person name="Nedjari H."/>
            <person name="Nordsiek G."/>
            <person name="Novella S."/>
            <person name="de Pablos B."/>
            <person name="Perez-Diaz J.-C."/>
            <person name="Purcell R."/>
            <person name="Remmel B."/>
            <person name="Rose M."/>
            <person name="Schlueter T."/>
            <person name="Simoes N."/>
            <person name="Tierrez A."/>
            <person name="Vazquez-Boland J.-A."/>
            <person name="Voss H."/>
            <person name="Wehland J."/>
            <person name="Cossart P."/>
        </authorList>
    </citation>
    <scope>NUCLEOTIDE SEQUENCE [LARGE SCALE GENOMIC DNA]</scope>
    <source>
        <strain>ATCC BAA-680 / CLIP 11262</strain>
    </source>
</reference>
<proteinExistence type="inferred from homology"/>
<dbReference type="EC" id="2.7.7.101" evidence="1"/>
<dbReference type="EMBL" id="AL596168">
    <property type="protein sequence ID" value="CAC96723.1"/>
    <property type="molecule type" value="Genomic_DNA"/>
</dbReference>
<dbReference type="PIR" id="AC1619">
    <property type="entry name" value="AC1619"/>
</dbReference>
<dbReference type="RefSeq" id="WP_010991560.1">
    <property type="nucleotide sequence ID" value="NC_003212.1"/>
</dbReference>
<dbReference type="SMR" id="Q92BQ5"/>
<dbReference type="STRING" id="272626.gene:17565823"/>
<dbReference type="GeneID" id="93234873"/>
<dbReference type="KEGG" id="lin:dnaG"/>
<dbReference type="eggNOG" id="COG0305">
    <property type="taxonomic scope" value="Bacteria"/>
</dbReference>
<dbReference type="eggNOG" id="COG0358">
    <property type="taxonomic scope" value="Bacteria"/>
</dbReference>
<dbReference type="HOGENOM" id="CLU_013501_3_3_9"/>
<dbReference type="OrthoDB" id="9803773at2"/>
<dbReference type="Proteomes" id="UP000002513">
    <property type="component" value="Chromosome"/>
</dbReference>
<dbReference type="GO" id="GO:0005737">
    <property type="term" value="C:cytoplasm"/>
    <property type="evidence" value="ECO:0007669"/>
    <property type="project" value="TreeGrafter"/>
</dbReference>
<dbReference type="GO" id="GO:0000428">
    <property type="term" value="C:DNA-directed RNA polymerase complex"/>
    <property type="evidence" value="ECO:0007669"/>
    <property type="project" value="UniProtKB-KW"/>
</dbReference>
<dbReference type="GO" id="GO:1990077">
    <property type="term" value="C:primosome complex"/>
    <property type="evidence" value="ECO:0007669"/>
    <property type="project" value="UniProtKB-KW"/>
</dbReference>
<dbReference type="GO" id="GO:0005524">
    <property type="term" value="F:ATP binding"/>
    <property type="evidence" value="ECO:0007669"/>
    <property type="project" value="InterPro"/>
</dbReference>
<dbReference type="GO" id="GO:0003677">
    <property type="term" value="F:DNA binding"/>
    <property type="evidence" value="ECO:0007669"/>
    <property type="project" value="UniProtKB-KW"/>
</dbReference>
<dbReference type="GO" id="GO:0003678">
    <property type="term" value="F:DNA helicase activity"/>
    <property type="evidence" value="ECO:0007669"/>
    <property type="project" value="InterPro"/>
</dbReference>
<dbReference type="GO" id="GO:0003899">
    <property type="term" value="F:DNA-directed RNA polymerase activity"/>
    <property type="evidence" value="ECO:0007669"/>
    <property type="project" value="InterPro"/>
</dbReference>
<dbReference type="GO" id="GO:0008270">
    <property type="term" value="F:zinc ion binding"/>
    <property type="evidence" value="ECO:0007669"/>
    <property type="project" value="UniProtKB-UniRule"/>
</dbReference>
<dbReference type="GO" id="GO:0006269">
    <property type="term" value="P:DNA replication, synthesis of primer"/>
    <property type="evidence" value="ECO:0007669"/>
    <property type="project" value="UniProtKB-UniRule"/>
</dbReference>
<dbReference type="CDD" id="cd03364">
    <property type="entry name" value="TOPRIM_DnaG_primases"/>
    <property type="match status" value="1"/>
</dbReference>
<dbReference type="FunFam" id="3.90.580.10:FF:000001">
    <property type="entry name" value="DNA primase"/>
    <property type="match status" value="1"/>
</dbReference>
<dbReference type="FunFam" id="3.90.980.10:FF:000001">
    <property type="entry name" value="DNA primase"/>
    <property type="match status" value="1"/>
</dbReference>
<dbReference type="Gene3D" id="3.40.1360.10">
    <property type="match status" value="1"/>
</dbReference>
<dbReference type="Gene3D" id="3.90.980.10">
    <property type="entry name" value="DNA primase, catalytic core, N-terminal domain"/>
    <property type="match status" value="1"/>
</dbReference>
<dbReference type="Gene3D" id="1.10.860.10">
    <property type="entry name" value="DNAb Helicase, Chain A"/>
    <property type="match status" value="1"/>
</dbReference>
<dbReference type="Gene3D" id="3.90.580.10">
    <property type="entry name" value="Zinc finger, CHC2-type domain"/>
    <property type="match status" value="1"/>
</dbReference>
<dbReference type="HAMAP" id="MF_00974">
    <property type="entry name" value="DNA_primase_DnaG"/>
    <property type="match status" value="1"/>
</dbReference>
<dbReference type="InterPro" id="IPR036185">
    <property type="entry name" value="DNA_heli_DnaB-like_N_sf"/>
</dbReference>
<dbReference type="InterPro" id="IPR016136">
    <property type="entry name" value="DNA_helicase_N/primase_C"/>
</dbReference>
<dbReference type="InterPro" id="IPR037068">
    <property type="entry name" value="DNA_primase_core_N_sf"/>
</dbReference>
<dbReference type="InterPro" id="IPR019475">
    <property type="entry name" value="DNA_primase_DnaB-bd"/>
</dbReference>
<dbReference type="InterPro" id="IPR006295">
    <property type="entry name" value="DNA_primase_DnaG"/>
</dbReference>
<dbReference type="InterPro" id="IPR036977">
    <property type="entry name" value="DNA_primase_Znf_CHC2"/>
</dbReference>
<dbReference type="InterPro" id="IPR030846">
    <property type="entry name" value="DnaG_bac"/>
</dbReference>
<dbReference type="InterPro" id="IPR013264">
    <property type="entry name" value="DNAG_N"/>
</dbReference>
<dbReference type="InterPro" id="IPR050219">
    <property type="entry name" value="DnaG_primase"/>
</dbReference>
<dbReference type="InterPro" id="IPR034151">
    <property type="entry name" value="TOPRIM_DnaG_bac"/>
</dbReference>
<dbReference type="InterPro" id="IPR006171">
    <property type="entry name" value="TOPRIM_dom"/>
</dbReference>
<dbReference type="InterPro" id="IPR002694">
    <property type="entry name" value="Znf_CHC2"/>
</dbReference>
<dbReference type="NCBIfam" id="TIGR01391">
    <property type="entry name" value="dnaG"/>
    <property type="match status" value="1"/>
</dbReference>
<dbReference type="PANTHER" id="PTHR30313">
    <property type="entry name" value="DNA PRIMASE"/>
    <property type="match status" value="1"/>
</dbReference>
<dbReference type="PANTHER" id="PTHR30313:SF2">
    <property type="entry name" value="DNA PRIMASE"/>
    <property type="match status" value="1"/>
</dbReference>
<dbReference type="Pfam" id="PF10410">
    <property type="entry name" value="DnaB_bind"/>
    <property type="match status" value="1"/>
</dbReference>
<dbReference type="Pfam" id="PF08275">
    <property type="entry name" value="DNAG_N"/>
    <property type="match status" value="1"/>
</dbReference>
<dbReference type="Pfam" id="PF13155">
    <property type="entry name" value="Toprim_2"/>
    <property type="match status" value="1"/>
</dbReference>
<dbReference type="Pfam" id="PF01807">
    <property type="entry name" value="Zn_ribbon_DnaG"/>
    <property type="match status" value="1"/>
</dbReference>
<dbReference type="PIRSF" id="PIRSF002811">
    <property type="entry name" value="DnaG"/>
    <property type="match status" value="1"/>
</dbReference>
<dbReference type="SMART" id="SM00493">
    <property type="entry name" value="TOPRIM"/>
    <property type="match status" value="1"/>
</dbReference>
<dbReference type="SMART" id="SM00400">
    <property type="entry name" value="ZnF_CHCC"/>
    <property type="match status" value="1"/>
</dbReference>
<dbReference type="SUPFAM" id="SSF56731">
    <property type="entry name" value="DNA primase core"/>
    <property type="match status" value="1"/>
</dbReference>
<dbReference type="SUPFAM" id="SSF48024">
    <property type="entry name" value="N-terminal domain of DnaB helicase"/>
    <property type="match status" value="1"/>
</dbReference>
<dbReference type="SUPFAM" id="SSF57783">
    <property type="entry name" value="Zinc beta-ribbon"/>
    <property type="match status" value="1"/>
</dbReference>
<dbReference type="PROSITE" id="PS50880">
    <property type="entry name" value="TOPRIM"/>
    <property type="match status" value="1"/>
</dbReference>
<gene>
    <name evidence="1" type="primary">dnaG</name>
    <name type="ordered locus">lin1492</name>
</gene>
<protein>
    <recommendedName>
        <fullName evidence="1">DNA primase</fullName>
        <ecNumber evidence="1">2.7.7.101</ecNumber>
    </recommendedName>
</protein>
<sequence length="626" mass="71801">MARIPEEVIDQVRNQADIVDIIGNYVQLKKQGRNYSGLCPFHGEKTPSFSVSPEKQIFHCFGCGKGGNVFSFLMEHDGLTFVESVKKVADMSHLDVDIELPEERDTSNLPKETSETAKMVEMHQLTAKLYHYILMETEEGAAALTYLKERGMSEQMMASFQIGFAPNHHATITSFLEKRGMDLQLAGTAGLLSERDDGQMVDRFRNRIMFPITNDRGQINAFSGRLFDRDDGPKYLNSPETPIFNKRRTLFHFSEARQAIRKQEEITLMEGFMDVISAEEAGVQNAVASMGTSLTEEHADLIKRLTNRAIICYDGDRAGIEAAYKAGTLLVERNRLDVFVLQLPAGKDPDDFIRASGADKFKEIYKQQRMTWTAFKINYLRKERNLQNETDKIAYIDDCLREIAKLDQAVERELYLKQLADEFELTIETLKQQLQQSLKNTHKERQNHSYNEPPIDDSFMGMIPQEDSEMLFSFEQPTKKLSAHTTAEQQLMKAMMENRDSFLLIKQLLGDTEFYHDNYQALYTYLIGYFAEGNDADPHKFMDSVPDAGMKGLISSLEMVISPDEQGKTQFEDYIKSLKRFKLEQAKKELEQQLAAFNRENDKENEIRVMLEIVQLNRKLNSGQLD</sequence>
<organism>
    <name type="scientific">Listeria innocua serovar 6a (strain ATCC BAA-680 / CLIP 11262)</name>
    <dbReference type="NCBI Taxonomy" id="272626"/>
    <lineage>
        <taxon>Bacteria</taxon>
        <taxon>Bacillati</taxon>
        <taxon>Bacillota</taxon>
        <taxon>Bacilli</taxon>
        <taxon>Bacillales</taxon>
        <taxon>Listeriaceae</taxon>
        <taxon>Listeria</taxon>
    </lineage>
</organism>
<keyword id="KW-0235">DNA replication</keyword>
<keyword id="KW-0238">DNA-binding</keyword>
<keyword id="KW-0240">DNA-directed RNA polymerase</keyword>
<keyword id="KW-0460">Magnesium</keyword>
<keyword id="KW-0479">Metal-binding</keyword>
<keyword id="KW-0548">Nucleotidyltransferase</keyword>
<keyword id="KW-0639">Primosome</keyword>
<keyword id="KW-0804">Transcription</keyword>
<keyword id="KW-0808">Transferase</keyword>
<keyword id="KW-0862">Zinc</keyword>
<keyword id="KW-0863">Zinc-finger</keyword>
<feature type="chain" id="PRO_0000180499" description="DNA primase">
    <location>
        <begin position="1"/>
        <end position="626"/>
    </location>
</feature>
<feature type="domain" description="Toprim" evidence="1">
    <location>
        <begin position="264"/>
        <end position="346"/>
    </location>
</feature>
<feature type="zinc finger region" description="CHC2-type" evidence="1">
    <location>
        <begin position="39"/>
        <end position="63"/>
    </location>
</feature>
<feature type="binding site" evidence="1">
    <location>
        <position position="270"/>
    </location>
    <ligand>
        <name>Mg(2+)</name>
        <dbReference type="ChEBI" id="CHEBI:18420"/>
        <label>1</label>
        <note>catalytic</note>
    </ligand>
</feature>
<feature type="binding site" evidence="1">
    <location>
        <position position="314"/>
    </location>
    <ligand>
        <name>Mg(2+)</name>
        <dbReference type="ChEBI" id="CHEBI:18420"/>
        <label>1</label>
        <note>catalytic</note>
    </ligand>
</feature>
<feature type="binding site" evidence="1">
    <location>
        <position position="314"/>
    </location>
    <ligand>
        <name>Mg(2+)</name>
        <dbReference type="ChEBI" id="CHEBI:18420"/>
        <label>2</label>
    </ligand>
</feature>
<feature type="binding site" evidence="1">
    <location>
        <position position="316"/>
    </location>
    <ligand>
        <name>Mg(2+)</name>
        <dbReference type="ChEBI" id="CHEBI:18420"/>
        <label>2</label>
    </ligand>
</feature>
<evidence type="ECO:0000255" key="1">
    <source>
        <dbReference type="HAMAP-Rule" id="MF_00974"/>
    </source>
</evidence>